<sequence length="276" mass="29844">MLDILSAIILGAVQGISEFLPISSSGHLVLVPALLGIETGLAFDTILHIGTLVAIFTFFWKDIINLIKGFILSIIDLTEGVDIFKRELHRVPEKRFAWLIIVGTIPTGIMGILLKDAIETIFRGTLFVGIFLLVTAAVLYYSERHSSGQITQKDMSFKQALIVGICQGLAVFPGISRSGSTIASGLCLGLNREYAARYSFLLSIPAVIGAGLIQIKDIATLDASASVLLAGFISSVIFGYLSIKLLMKMIKGWSLDIFAYYCTIIGIITIILSVVL</sequence>
<dbReference type="EC" id="3.6.1.27" evidence="1"/>
<dbReference type="EMBL" id="CP000102">
    <property type="protein sequence ID" value="ABC56434.1"/>
    <property type="molecule type" value="Genomic_DNA"/>
</dbReference>
<dbReference type="RefSeq" id="WP_011405633.1">
    <property type="nucleotide sequence ID" value="NC_007681.1"/>
</dbReference>
<dbReference type="SMR" id="Q2NIA2"/>
<dbReference type="STRING" id="339860.Msp_0014"/>
<dbReference type="KEGG" id="mst:Msp_0014"/>
<dbReference type="eggNOG" id="arCOG04761">
    <property type="taxonomic scope" value="Archaea"/>
</dbReference>
<dbReference type="HOGENOM" id="CLU_060296_1_2_2"/>
<dbReference type="OrthoDB" id="65864at2157"/>
<dbReference type="Proteomes" id="UP000001931">
    <property type="component" value="Chromosome"/>
</dbReference>
<dbReference type="GO" id="GO:0005886">
    <property type="term" value="C:plasma membrane"/>
    <property type="evidence" value="ECO:0007669"/>
    <property type="project" value="UniProtKB-SubCell"/>
</dbReference>
<dbReference type="GO" id="GO:0050380">
    <property type="term" value="F:undecaprenyl-diphosphatase activity"/>
    <property type="evidence" value="ECO:0007669"/>
    <property type="project" value="UniProtKB-UniRule"/>
</dbReference>
<dbReference type="HAMAP" id="MF_01006">
    <property type="entry name" value="Undec_diphosphatase"/>
    <property type="match status" value="1"/>
</dbReference>
<dbReference type="InterPro" id="IPR003824">
    <property type="entry name" value="UppP"/>
</dbReference>
<dbReference type="PANTHER" id="PTHR30622">
    <property type="entry name" value="UNDECAPRENYL-DIPHOSPHATASE"/>
    <property type="match status" value="1"/>
</dbReference>
<dbReference type="PANTHER" id="PTHR30622:SF2">
    <property type="entry name" value="UNDECAPRENYL-DIPHOSPHATASE"/>
    <property type="match status" value="1"/>
</dbReference>
<dbReference type="Pfam" id="PF02673">
    <property type="entry name" value="BacA"/>
    <property type="match status" value="1"/>
</dbReference>
<gene>
    <name evidence="1" type="primary">uppP</name>
    <name type="ordered locus">Msp_0014</name>
</gene>
<reference key="1">
    <citation type="journal article" date="2006" name="J. Bacteriol.">
        <title>The genome sequence of Methanosphaera stadtmanae reveals why this human intestinal archaeon is restricted to methanol and H2 for methane formation and ATP synthesis.</title>
        <authorList>
            <person name="Fricke W.F."/>
            <person name="Seedorf H."/>
            <person name="Henne A."/>
            <person name="Kruer M."/>
            <person name="Liesegang H."/>
            <person name="Hedderich R."/>
            <person name="Gottschalk G."/>
            <person name="Thauer R.K."/>
        </authorList>
    </citation>
    <scope>NUCLEOTIDE SEQUENCE [LARGE SCALE GENOMIC DNA]</scope>
    <source>
        <strain>ATCC 43021 / DSM 3091 / JCM 11832 / MCB-3</strain>
    </source>
</reference>
<evidence type="ECO:0000255" key="1">
    <source>
        <dbReference type="HAMAP-Rule" id="MF_01006"/>
    </source>
</evidence>
<proteinExistence type="inferred from homology"/>
<feature type="chain" id="PRO_0000250280" description="Undecaprenyl-diphosphatase">
    <location>
        <begin position="1"/>
        <end position="276"/>
    </location>
</feature>
<feature type="transmembrane region" description="Helical" evidence="1">
    <location>
        <begin position="40"/>
        <end position="60"/>
    </location>
</feature>
<feature type="transmembrane region" description="Helical" evidence="1">
    <location>
        <begin position="98"/>
        <end position="118"/>
    </location>
</feature>
<feature type="transmembrane region" description="Helical" evidence="1">
    <location>
        <begin position="121"/>
        <end position="141"/>
    </location>
</feature>
<feature type="transmembrane region" description="Helical" evidence="1">
    <location>
        <begin position="155"/>
        <end position="175"/>
    </location>
</feature>
<feature type="transmembrane region" description="Helical" evidence="1">
    <location>
        <begin position="200"/>
        <end position="220"/>
    </location>
</feature>
<feature type="transmembrane region" description="Helical" evidence="1">
    <location>
        <begin position="227"/>
        <end position="247"/>
    </location>
</feature>
<feature type="transmembrane region" description="Helical" evidence="1">
    <location>
        <begin position="255"/>
        <end position="275"/>
    </location>
</feature>
<accession>Q2NIA2</accession>
<keyword id="KW-1003">Cell membrane</keyword>
<keyword id="KW-0378">Hydrolase</keyword>
<keyword id="KW-0472">Membrane</keyword>
<keyword id="KW-1185">Reference proteome</keyword>
<keyword id="KW-0812">Transmembrane</keyword>
<keyword id="KW-1133">Transmembrane helix</keyword>
<comment type="function">
    <text evidence="1">Catalyzes the dephosphorylation of undecaprenyl diphosphate (UPP).</text>
</comment>
<comment type="catalytic activity">
    <reaction evidence="1">
        <text>di-trans,octa-cis-undecaprenyl diphosphate + H2O = di-trans,octa-cis-undecaprenyl phosphate + phosphate + H(+)</text>
        <dbReference type="Rhea" id="RHEA:28094"/>
        <dbReference type="ChEBI" id="CHEBI:15377"/>
        <dbReference type="ChEBI" id="CHEBI:15378"/>
        <dbReference type="ChEBI" id="CHEBI:43474"/>
        <dbReference type="ChEBI" id="CHEBI:58405"/>
        <dbReference type="ChEBI" id="CHEBI:60392"/>
        <dbReference type="EC" id="3.6.1.27"/>
    </reaction>
</comment>
<comment type="subcellular location">
    <subcellularLocation>
        <location evidence="1">Cell membrane</location>
        <topology evidence="1">Multi-pass membrane protein</topology>
    </subcellularLocation>
</comment>
<comment type="similarity">
    <text evidence="1">Belongs to the UppP family.</text>
</comment>
<name>UPPP_METST</name>
<organism>
    <name type="scientific">Methanosphaera stadtmanae (strain ATCC 43021 / DSM 3091 / JCM 11832 / MCB-3)</name>
    <dbReference type="NCBI Taxonomy" id="339860"/>
    <lineage>
        <taxon>Archaea</taxon>
        <taxon>Methanobacteriati</taxon>
        <taxon>Methanobacteriota</taxon>
        <taxon>Methanomada group</taxon>
        <taxon>Methanobacteria</taxon>
        <taxon>Methanobacteriales</taxon>
        <taxon>Methanobacteriaceae</taxon>
        <taxon>Methanosphaera</taxon>
    </lineage>
</organism>
<protein>
    <recommendedName>
        <fullName evidence="1">Undecaprenyl-diphosphatase</fullName>
        <ecNumber evidence="1">3.6.1.27</ecNumber>
    </recommendedName>
    <alternativeName>
        <fullName evidence="1">Undecaprenyl pyrophosphate phosphatase</fullName>
    </alternativeName>
</protein>